<organism>
    <name type="scientific">Arabidopsis thaliana</name>
    <name type="common">Mouse-ear cress</name>
    <dbReference type="NCBI Taxonomy" id="3702"/>
    <lineage>
        <taxon>Eukaryota</taxon>
        <taxon>Viridiplantae</taxon>
        <taxon>Streptophyta</taxon>
        <taxon>Embryophyta</taxon>
        <taxon>Tracheophyta</taxon>
        <taxon>Spermatophyta</taxon>
        <taxon>Magnoliopsida</taxon>
        <taxon>eudicotyledons</taxon>
        <taxon>Gunneridae</taxon>
        <taxon>Pentapetalae</taxon>
        <taxon>rosids</taxon>
        <taxon>malvids</taxon>
        <taxon>Brassicales</taxon>
        <taxon>Brassicaceae</taxon>
        <taxon>Camelineae</taxon>
        <taxon>Arabidopsis</taxon>
    </lineage>
</organism>
<name>FACR5_ARATH</name>
<accession>Q0WRB0</accession>
<accession>Q9LXN2</accession>
<comment type="function">
    <text evidence="1 2 3">Catalyzes the reduction of fatty acyl-CoA to fatty alcohols (PubMed:20571114, PubMed:24005667). Catalyzes specifically the formation of C18:0 fatty alcohol (PubMed:20571114, PubMed:24005667). Provides the fatty alcohols required for synthesis of suberin in roots, seed coat and wound-induced leaf tissue (PubMed:20571114). Provides the fatty alcohols required for synthesis of alkyl hydroxycinnamates in root waxes (PubMed:22797656).</text>
</comment>
<comment type="catalytic activity">
    <reaction evidence="1 3">
        <text>a long-chain fatty acyl-CoA + 2 NADPH + 2 H(+) = a long-chain primary fatty alcohol + 2 NADP(+) + CoA</text>
        <dbReference type="Rhea" id="RHEA:52716"/>
        <dbReference type="ChEBI" id="CHEBI:15378"/>
        <dbReference type="ChEBI" id="CHEBI:57287"/>
        <dbReference type="ChEBI" id="CHEBI:57783"/>
        <dbReference type="ChEBI" id="CHEBI:58349"/>
        <dbReference type="ChEBI" id="CHEBI:77396"/>
        <dbReference type="ChEBI" id="CHEBI:83139"/>
        <dbReference type="EC" id="1.2.1.84"/>
    </reaction>
</comment>
<comment type="tissue specificity">
    <text evidence="1">Expressed in the endodermal cell layer surrounding the central vasculature in roots. Expressed in floral organs of very young unopened buds and receptacle of siliques.</text>
</comment>
<comment type="induction">
    <text evidence="1">Induced by wounding and salt stress.</text>
</comment>
<comment type="similarity">
    <text evidence="5">Belongs to the fatty acyl-CoA reductase family.</text>
</comment>
<reference key="1">
    <citation type="journal article" date="2000" name="Nature">
        <title>Sequence and analysis of chromosome 3 of the plant Arabidopsis thaliana.</title>
        <authorList>
            <person name="Salanoubat M."/>
            <person name="Lemcke K."/>
            <person name="Rieger M."/>
            <person name="Ansorge W."/>
            <person name="Unseld M."/>
            <person name="Fartmann B."/>
            <person name="Valle G."/>
            <person name="Bloecker H."/>
            <person name="Perez-Alonso M."/>
            <person name="Obermaier B."/>
            <person name="Delseny M."/>
            <person name="Boutry M."/>
            <person name="Grivell L.A."/>
            <person name="Mache R."/>
            <person name="Puigdomenech P."/>
            <person name="De Simone V."/>
            <person name="Choisne N."/>
            <person name="Artiguenave F."/>
            <person name="Robert C."/>
            <person name="Brottier P."/>
            <person name="Wincker P."/>
            <person name="Cattolico L."/>
            <person name="Weissenbach J."/>
            <person name="Saurin W."/>
            <person name="Quetier F."/>
            <person name="Schaefer M."/>
            <person name="Mueller-Auer S."/>
            <person name="Gabel C."/>
            <person name="Fuchs M."/>
            <person name="Benes V."/>
            <person name="Wurmbach E."/>
            <person name="Drzonek H."/>
            <person name="Erfle H."/>
            <person name="Jordan N."/>
            <person name="Bangert S."/>
            <person name="Wiedelmann R."/>
            <person name="Kranz H."/>
            <person name="Voss H."/>
            <person name="Holland R."/>
            <person name="Brandt P."/>
            <person name="Nyakatura G."/>
            <person name="Vezzi A."/>
            <person name="D'Angelo M."/>
            <person name="Pallavicini A."/>
            <person name="Toppo S."/>
            <person name="Simionati B."/>
            <person name="Conrad A."/>
            <person name="Hornischer K."/>
            <person name="Kauer G."/>
            <person name="Loehnert T.-H."/>
            <person name="Nordsiek G."/>
            <person name="Reichelt J."/>
            <person name="Scharfe M."/>
            <person name="Schoen O."/>
            <person name="Bargues M."/>
            <person name="Terol J."/>
            <person name="Climent J."/>
            <person name="Navarro P."/>
            <person name="Collado C."/>
            <person name="Perez-Perez A."/>
            <person name="Ottenwaelder B."/>
            <person name="Duchemin D."/>
            <person name="Cooke R."/>
            <person name="Laudie M."/>
            <person name="Berger-Llauro C."/>
            <person name="Purnelle B."/>
            <person name="Masuy D."/>
            <person name="de Haan M."/>
            <person name="Maarse A.C."/>
            <person name="Alcaraz J.-P."/>
            <person name="Cottet A."/>
            <person name="Casacuberta E."/>
            <person name="Monfort A."/>
            <person name="Argiriou A."/>
            <person name="Flores M."/>
            <person name="Liguori R."/>
            <person name="Vitale D."/>
            <person name="Mannhaupt G."/>
            <person name="Haase D."/>
            <person name="Schoof H."/>
            <person name="Rudd S."/>
            <person name="Zaccaria P."/>
            <person name="Mewes H.-W."/>
            <person name="Mayer K.F.X."/>
            <person name="Kaul S."/>
            <person name="Town C.D."/>
            <person name="Koo H.L."/>
            <person name="Tallon L.J."/>
            <person name="Jenkins J."/>
            <person name="Rooney T."/>
            <person name="Rizzo M."/>
            <person name="Walts A."/>
            <person name="Utterback T."/>
            <person name="Fujii C.Y."/>
            <person name="Shea T.P."/>
            <person name="Creasy T.H."/>
            <person name="Haas B."/>
            <person name="Maiti R."/>
            <person name="Wu D."/>
            <person name="Peterson J."/>
            <person name="Van Aken S."/>
            <person name="Pai G."/>
            <person name="Militscher J."/>
            <person name="Sellers P."/>
            <person name="Gill J.E."/>
            <person name="Feldblyum T.V."/>
            <person name="Preuss D."/>
            <person name="Lin X."/>
            <person name="Nierman W.C."/>
            <person name="Salzberg S.L."/>
            <person name="White O."/>
            <person name="Venter J.C."/>
            <person name="Fraser C.M."/>
            <person name="Kaneko T."/>
            <person name="Nakamura Y."/>
            <person name="Sato S."/>
            <person name="Kato T."/>
            <person name="Asamizu E."/>
            <person name="Sasamoto S."/>
            <person name="Kimura T."/>
            <person name="Idesawa K."/>
            <person name="Kawashima K."/>
            <person name="Kishida Y."/>
            <person name="Kiyokawa C."/>
            <person name="Kohara M."/>
            <person name="Matsumoto M."/>
            <person name="Matsuno A."/>
            <person name="Muraki A."/>
            <person name="Nakayama S."/>
            <person name="Nakazaki N."/>
            <person name="Shinpo S."/>
            <person name="Takeuchi C."/>
            <person name="Wada T."/>
            <person name="Watanabe A."/>
            <person name="Yamada M."/>
            <person name="Yasuda M."/>
            <person name="Tabata S."/>
        </authorList>
    </citation>
    <scope>NUCLEOTIDE SEQUENCE [LARGE SCALE GENOMIC DNA]</scope>
    <source>
        <strain>cv. Columbia</strain>
    </source>
</reference>
<reference key="2">
    <citation type="journal article" date="2017" name="Plant J.">
        <title>Araport11: a complete reannotation of the Arabidopsis thaliana reference genome.</title>
        <authorList>
            <person name="Cheng C.Y."/>
            <person name="Krishnakumar V."/>
            <person name="Chan A.P."/>
            <person name="Thibaud-Nissen F."/>
            <person name="Schobel S."/>
            <person name="Town C.D."/>
        </authorList>
    </citation>
    <scope>GENOME REANNOTATION</scope>
    <source>
        <strain>cv. Columbia</strain>
    </source>
</reference>
<reference key="3">
    <citation type="submission" date="2006-07" db="EMBL/GenBank/DDBJ databases">
        <title>Large-scale analysis of RIKEN Arabidopsis full-length (RAFL) cDNAs.</title>
        <authorList>
            <person name="Totoki Y."/>
            <person name="Seki M."/>
            <person name="Ishida J."/>
            <person name="Nakajima M."/>
            <person name="Enju A."/>
            <person name="Kamiya A."/>
            <person name="Narusaka M."/>
            <person name="Shin-i T."/>
            <person name="Nakagawa M."/>
            <person name="Sakamoto N."/>
            <person name="Oishi K."/>
            <person name="Kohara Y."/>
            <person name="Kobayashi M."/>
            <person name="Toyoda A."/>
            <person name="Sakaki Y."/>
            <person name="Sakurai T."/>
            <person name="Iida K."/>
            <person name="Akiyama K."/>
            <person name="Satou M."/>
            <person name="Toyoda T."/>
            <person name="Konagaya A."/>
            <person name="Carninci P."/>
            <person name="Kawai J."/>
            <person name="Hayashizaki Y."/>
            <person name="Shinozaki K."/>
        </authorList>
    </citation>
    <scope>NUCLEOTIDE SEQUENCE [LARGE SCALE MRNA]</scope>
    <source>
        <strain>cv. Columbia</strain>
    </source>
</reference>
<reference key="4">
    <citation type="journal article" date="2010" name="Plant Physiol.">
        <title>Three Arabidopsis fatty acyl-coenzyme A reductases, FAR1, FAR4, and FAR5, generate primary fatty alcohols associated with suberin deposition.</title>
        <authorList>
            <person name="Domergue F."/>
            <person name="Vishwanath S.J."/>
            <person name="Joubes J."/>
            <person name="Ono J."/>
            <person name="Lee J.A."/>
            <person name="Bourdon M."/>
            <person name="Alhattab R."/>
            <person name="Lowe C."/>
            <person name="Pascal S."/>
            <person name="Lessire R."/>
            <person name="Rowland O."/>
        </authorList>
    </citation>
    <scope>FUNCTION</scope>
    <scope>CATALYTIC ACTIVITY</scope>
    <scope>TISSUE SPECIFICITY</scope>
    <scope>INDUCTION</scope>
</reference>
<reference key="5">
    <citation type="journal article" date="2012" name="Plant Physiol.">
        <title>Identification of an Arabidopsis fatty alcohol:caffeoyl-Coenzyme A acyltransferase required for the synthesis of alkyl hydroxycinnamates in root waxes.</title>
        <authorList>
            <person name="Kosma D.K."/>
            <person name="Molina I."/>
            <person name="Ohlrogge J.B."/>
            <person name="Pollard M."/>
        </authorList>
    </citation>
    <scope>FUNCTION</scope>
</reference>
<reference key="6">
    <citation type="journal article" date="2013" name="J. Biol. Chem.">
        <title>Identification of amino acids conferring chain length substrate specificities on fatty alcohol-forming reductases FAR5 and FAR8 from Arabidopsis thaliana.</title>
        <authorList>
            <person name="Chacon M.G."/>
            <person name="Fournier A.E."/>
            <person name="Tran F."/>
            <person name="Dittrich-Domergue F."/>
            <person name="Pulsifer I.P."/>
            <person name="Domergue F."/>
            <person name="Rowland O."/>
        </authorList>
    </citation>
    <scope>FUNCTION</scope>
    <scope>CATALYTIC ACTIVITY</scope>
    <scope>MUTAGENESIS OF TYR-238; LYS-242; THR-347; ALA-355; PRO-363 AND VAL-377</scope>
</reference>
<evidence type="ECO:0000269" key="1">
    <source>
    </source>
</evidence>
<evidence type="ECO:0000269" key="2">
    <source>
    </source>
</evidence>
<evidence type="ECO:0000269" key="3">
    <source>
    </source>
</evidence>
<evidence type="ECO:0000303" key="4">
    <source>
    </source>
</evidence>
<evidence type="ECO:0000305" key="5"/>
<feature type="chain" id="PRO_0000378345" description="Probable fatty acyl-CoA reductase 5">
    <location>
        <begin position="1"/>
        <end position="496"/>
    </location>
</feature>
<feature type="mutagenesis site" description="Loss of enzymatic activity." evidence="3">
    <original>Y</original>
    <variation>F</variation>
    <location>
        <position position="238"/>
    </location>
</feature>
<feature type="mutagenesis site" description="Loss of enzymatic activity." evidence="3">
    <original>K</original>
    <variation>I</variation>
    <location>
        <position position="242"/>
    </location>
</feature>
<feature type="mutagenesis site" description="Decreases protein stability and enzymatic activity." evidence="3">
    <original>T</original>
    <variation>I</variation>
    <location>
        <position position="347"/>
    </location>
</feature>
<feature type="mutagenesis site" description="Catalyzes the formation of C16:0 fatty alcohol instead of C18:0; when associated with M-377." evidence="3">
    <original>A</original>
    <variation>L</variation>
    <location>
        <position position="355"/>
    </location>
</feature>
<feature type="mutagenesis site" description="Decreases protein stability and enzymatic activity." evidence="3">
    <original>P</original>
    <variation>S</variation>
    <location>
        <position position="363"/>
    </location>
</feature>
<feature type="mutagenesis site" description="Catalyzes the formation of C16:0 fatty alcohol instead of C18:0; when associated with L-355." evidence="3">
    <original>V</original>
    <variation>M</variation>
    <location>
        <position position="377"/>
    </location>
</feature>
<gene>
    <name evidence="4" type="primary">FAR5</name>
    <name type="ordered locus">At3g44550</name>
    <name type="ORF">F14L2.100</name>
</gene>
<proteinExistence type="evidence at protein level"/>
<dbReference type="EC" id="1.2.1.84" evidence="1 3"/>
<dbReference type="EMBL" id="AL353818">
    <property type="protein sequence ID" value="CAB88537.1"/>
    <property type="molecule type" value="Genomic_DNA"/>
</dbReference>
<dbReference type="EMBL" id="CP002686">
    <property type="protein sequence ID" value="AEE77914.1"/>
    <property type="molecule type" value="Genomic_DNA"/>
</dbReference>
<dbReference type="EMBL" id="AK228404">
    <property type="protein sequence ID" value="BAF00339.1"/>
    <property type="molecule type" value="mRNA"/>
</dbReference>
<dbReference type="PIR" id="T48935">
    <property type="entry name" value="T48935"/>
</dbReference>
<dbReference type="RefSeq" id="NP_190041.2">
    <property type="nucleotide sequence ID" value="NM_114323.4"/>
</dbReference>
<dbReference type="SMR" id="Q0WRB0"/>
<dbReference type="FunCoup" id="Q0WRB0">
    <property type="interactions" value="396"/>
</dbReference>
<dbReference type="STRING" id="3702.Q0WRB0"/>
<dbReference type="iPTMnet" id="Q0WRB0"/>
<dbReference type="PaxDb" id="3702-AT3G44550.1"/>
<dbReference type="ProteomicsDB" id="230848"/>
<dbReference type="EnsemblPlants" id="AT3G44550.1">
    <property type="protein sequence ID" value="AT3G44550.1"/>
    <property type="gene ID" value="AT3G44550"/>
</dbReference>
<dbReference type="GeneID" id="823580"/>
<dbReference type="Gramene" id="AT3G44550.1">
    <property type="protein sequence ID" value="AT3G44550.1"/>
    <property type="gene ID" value="AT3G44550"/>
</dbReference>
<dbReference type="KEGG" id="ath:AT3G44550"/>
<dbReference type="Araport" id="AT3G44550"/>
<dbReference type="TAIR" id="AT3G44550">
    <property type="gene designation" value="FAR5"/>
</dbReference>
<dbReference type="eggNOG" id="KOG1221">
    <property type="taxonomic scope" value="Eukaryota"/>
</dbReference>
<dbReference type="HOGENOM" id="CLU_024661_4_1_1"/>
<dbReference type="InParanoid" id="Q0WRB0"/>
<dbReference type="OMA" id="YFTTNGW"/>
<dbReference type="PhylomeDB" id="Q0WRB0"/>
<dbReference type="BioCyc" id="ARA:AT3G44550-MONOMER"/>
<dbReference type="BRENDA" id="1.2.1.84">
    <property type="organism ID" value="399"/>
</dbReference>
<dbReference type="BRENDA" id="1.2.1.B25">
    <property type="organism ID" value="399"/>
</dbReference>
<dbReference type="PRO" id="PR:Q0WRB0"/>
<dbReference type="Proteomes" id="UP000006548">
    <property type="component" value="Chromosome 3"/>
</dbReference>
<dbReference type="ExpressionAtlas" id="Q0WRB0">
    <property type="expression patterns" value="baseline and differential"/>
</dbReference>
<dbReference type="GO" id="GO:0102965">
    <property type="term" value="F:alcohol-forming long-chain fatty acyl-CoA reductase activity"/>
    <property type="evidence" value="ECO:0007669"/>
    <property type="project" value="UniProtKB-EC"/>
</dbReference>
<dbReference type="GO" id="GO:0080019">
    <property type="term" value="F:alcohol-forming very long-chain fatty acyl-CoA reductase activity"/>
    <property type="evidence" value="ECO:0007669"/>
    <property type="project" value="InterPro"/>
</dbReference>
<dbReference type="GO" id="GO:0050062">
    <property type="term" value="F:long-chain-fatty-acyl-CoA reductase activity"/>
    <property type="evidence" value="ECO:0000314"/>
    <property type="project" value="TAIR"/>
</dbReference>
<dbReference type="GO" id="GO:0006629">
    <property type="term" value="P:lipid metabolic process"/>
    <property type="evidence" value="ECO:0007669"/>
    <property type="project" value="UniProtKB-KW"/>
</dbReference>
<dbReference type="GO" id="GO:0009651">
    <property type="term" value="P:response to salt stress"/>
    <property type="evidence" value="ECO:0000270"/>
    <property type="project" value="TAIR"/>
</dbReference>
<dbReference type="GO" id="GO:0009611">
    <property type="term" value="P:response to wounding"/>
    <property type="evidence" value="ECO:0000270"/>
    <property type="project" value="TAIR"/>
</dbReference>
<dbReference type="GO" id="GO:0010345">
    <property type="term" value="P:suberin biosynthetic process"/>
    <property type="evidence" value="ECO:0000315"/>
    <property type="project" value="TAIR"/>
</dbReference>
<dbReference type="CDD" id="cd05236">
    <property type="entry name" value="FAR-N_SDR_e"/>
    <property type="match status" value="1"/>
</dbReference>
<dbReference type="CDD" id="cd09071">
    <property type="entry name" value="FAR_C"/>
    <property type="match status" value="1"/>
</dbReference>
<dbReference type="Gene3D" id="3.40.50.720">
    <property type="entry name" value="NAD(P)-binding Rossmann-like Domain"/>
    <property type="match status" value="1"/>
</dbReference>
<dbReference type="InterPro" id="IPR026055">
    <property type="entry name" value="FAR"/>
</dbReference>
<dbReference type="InterPro" id="IPR033640">
    <property type="entry name" value="FAR_C"/>
</dbReference>
<dbReference type="InterPro" id="IPR013120">
    <property type="entry name" value="Far_NAD-bd"/>
</dbReference>
<dbReference type="InterPro" id="IPR036291">
    <property type="entry name" value="NAD(P)-bd_dom_sf"/>
</dbReference>
<dbReference type="PANTHER" id="PTHR11011:SF82">
    <property type="entry name" value="FATTY ACYL-COA REDUCTASE 8-RELATED"/>
    <property type="match status" value="1"/>
</dbReference>
<dbReference type="PANTHER" id="PTHR11011">
    <property type="entry name" value="MALE STERILITY PROTEIN 2-RELATED"/>
    <property type="match status" value="1"/>
</dbReference>
<dbReference type="Pfam" id="PF07993">
    <property type="entry name" value="NAD_binding_4"/>
    <property type="match status" value="1"/>
</dbReference>
<dbReference type="Pfam" id="PF03015">
    <property type="entry name" value="Sterile"/>
    <property type="match status" value="1"/>
</dbReference>
<dbReference type="SUPFAM" id="SSF51735">
    <property type="entry name" value="NAD(P)-binding Rossmann-fold domains"/>
    <property type="match status" value="1"/>
</dbReference>
<sequence>MELNCVQFLRNKTILVTGATGFLAKVFVEKILRVQPNVKKLYLLVRASDNEAATKRLRTEVFEKELFKVLRQNLGDEKLNTLLYEKVVSVPGDIATDQLGINDSHLRERMQKEIDIVVNVAATTNFDERYDVGLGINTFGALNVLNFAKKCVKVQLLLHVSTAYVCGEKPGLIPEKPFIMEEIRNENGLQLDINLERELMKQRLKELNEQDCSEEDITLSMKELGMERAKLHGWPNTYVFTKSMGEMLLGKHKENLPLVIIRPTMITSTLSEPFPGWIEGLRTVDSVIIAYGKGVLKCFLVDVNSVCDMIPVDMVANAMITAAAKHAGGSGVHMVYHVGSSHQNPVTFGEIHEIAVRYFTKNPLRSRNGSLITVSKVRFIPTMALFSLYMTLRYKLPLQLLKLVDIIYPWRNGDKYGDKNRKIELVMRLVELYEPYVLFKGIFDDRNTKSLCANQKEEEIKNTEKLMFDFDPKGINWGDYLTNIHISGLVTHVLKK</sequence>
<protein>
    <recommendedName>
        <fullName evidence="5">Probable fatty acyl-CoA reductase 5</fullName>
        <ecNumber evidence="1 3">1.2.1.84</ecNumber>
    </recommendedName>
</protein>
<keyword id="KW-0444">Lipid biosynthesis</keyword>
<keyword id="KW-0443">Lipid metabolism</keyword>
<keyword id="KW-0521">NADP</keyword>
<keyword id="KW-0560">Oxidoreductase</keyword>
<keyword id="KW-1185">Reference proteome</keyword>